<sequence>MPLKEDDCCLFAEEYDGPPLSYNIPCAVPINVEKIPVAAVVSPVCISDNMSFPVIQPILSVESKKFLIDSVSPTSVIANCGSNQLELVSDSITVSPTSVIEHTEEEEEEEGGDGEDCELSSSGELLLRSCSVKESLDLNESSSNPLVPDWESNESVLSMDYPSSRVTGDCVSETNGDGKKQPVVTFLGIASDDGFEEEESCSNLRRVRVVPVKKQPQTKGKKGSCYRCFKGSRFTEKEVCLVCDAKYCNSCVLRAMGSMPEGRKCVTCIGFPIDESKRGSLGKCSRMLKRLLNDLEVKQIMKTERFCEANQLPAEYVYVNGQPLYPEELVTLQTCSNPPKKLKPGDYWYDKVSGLWGKEGEKPYQIISPHLNVGGPISPEASNGNTQVFINGREITKVELRMLQLAGVQCAGNPHFWVNEDGSYQEEGQKNTKGYIWGKAGTKLLCAVLSLPVPSKSTANASGEQLYSANSRSILDHLEHRTLQKILLVGNSGSGTSTIFKQAKILYKDVPFLEDERENIKVIIQTNVYGYLGMLLEGRERFEEEALALRNTKQCVLENIPADEGDAKSNDKTVTMYSIGPRLKAFSDWLLKTMAAGNLGVIFPAASREYAPLVEELWRDAAIQATYKRRSELGLLPSVASYFLERAIDVLTPDYEPSDLDILYAEGVTSSSGLACLDFSFPQTASEENLDPSDHHDSLLRYQLIRVPSRGLGENCKWIDMFEDVGMVVFVVSMSDYDQVSEDGTNKMLLTKKLFESIITHPIFENMDFLLILNKYDLLEEKVERVPLARCEWFQDFNPVVSRHRGSNNGNPTLGQLAFHFMAVKFKRFYSSLTGKKLFVSSSKSLDPNSVDSSLKLAMEILKWSEERTNICMSEYSMYSTEPSSFSN</sequence>
<name>XLG1_ARATH</name>
<evidence type="ECO:0000250" key="1"/>
<evidence type="ECO:0000255" key="2"/>
<evidence type="ECO:0000255" key="3">
    <source>
        <dbReference type="PROSITE-ProRule" id="PRU01230"/>
    </source>
</evidence>
<evidence type="ECO:0000256" key="4">
    <source>
        <dbReference type="SAM" id="MobiDB-lite"/>
    </source>
</evidence>
<evidence type="ECO:0000269" key="5">
    <source>
    </source>
</evidence>
<evidence type="ECO:0000269" key="6">
    <source>
    </source>
</evidence>
<evidence type="ECO:0000269" key="7">
    <source>
    </source>
</evidence>
<evidence type="ECO:0000305" key="8"/>
<evidence type="ECO:0000305" key="9">
    <source>
    </source>
</evidence>
<protein>
    <recommendedName>
        <fullName>Extra-large guanine nucleotide-binding protein 1</fullName>
    </recommendedName>
    <alternativeName>
        <fullName>Extra-large GTP-binding protein 1</fullName>
        <shortName>Extra-large G-protein 1</shortName>
    </alternativeName>
</protein>
<organism>
    <name type="scientific">Arabidopsis thaliana</name>
    <name type="common">Mouse-ear cress</name>
    <dbReference type="NCBI Taxonomy" id="3702"/>
    <lineage>
        <taxon>Eukaryota</taxon>
        <taxon>Viridiplantae</taxon>
        <taxon>Streptophyta</taxon>
        <taxon>Embryophyta</taxon>
        <taxon>Tracheophyta</taxon>
        <taxon>Spermatophyta</taxon>
        <taxon>Magnoliopsida</taxon>
        <taxon>eudicotyledons</taxon>
        <taxon>Gunneridae</taxon>
        <taxon>Pentapetalae</taxon>
        <taxon>rosids</taxon>
        <taxon>malvids</taxon>
        <taxon>Brassicales</taxon>
        <taxon>Brassicaceae</taxon>
        <taxon>Camelineae</taxon>
        <taxon>Arabidopsis</taxon>
    </lineage>
</organism>
<keyword id="KW-0106">Calcium</keyword>
<keyword id="KW-0342">GTP-binding</keyword>
<keyword id="KW-0479">Metal-binding</keyword>
<keyword id="KW-0547">Nucleotide-binding</keyword>
<keyword id="KW-0539">Nucleus</keyword>
<keyword id="KW-1185">Reference proteome</keyword>
<keyword id="KW-0807">Transducer</keyword>
<keyword id="KW-0862">Zinc</keyword>
<keyword id="KW-0863">Zinc-finger</keyword>
<gene>
    <name type="primary">XLG1</name>
    <name type="synonym">XLG</name>
    <name type="ordered locus">At2g23460</name>
    <name type="ORF">F26B6.11</name>
</gene>
<feature type="chain" id="PRO_0000423397" description="Extra-large guanine nucleotide-binding protein 1">
    <location>
        <begin position="1"/>
        <end position="888"/>
    </location>
</feature>
<feature type="domain" description="G-alpha" evidence="3">
    <location>
        <begin position="482"/>
        <end position="879"/>
    </location>
</feature>
<feature type="zinc finger region" description="RING-type; degenerate">
    <location>
        <begin position="225"/>
        <end position="268"/>
    </location>
</feature>
<feature type="region of interest" description="Disordered" evidence="4">
    <location>
        <begin position="98"/>
        <end position="119"/>
    </location>
</feature>
<feature type="region of interest" description="G1 motif" evidence="3">
    <location>
        <begin position="485"/>
        <end position="498"/>
    </location>
</feature>
<feature type="region of interest" description="G2 motif" evidence="3">
    <location>
        <begin position="661"/>
        <end position="669"/>
    </location>
</feature>
<feature type="region of interest" description="G3 motif" evidence="3">
    <location>
        <begin position="702"/>
        <end position="711"/>
    </location>
</feature>
<feature type="region of interest" description="G4 motif" evidence="3">
    <location>
        <begin position="770"/>
        <end position="777"/>
    </location>
</feature>
<feature type="region of interest" description="G5 motif" evidence="3">
    <location>
        <begin position="843"/>
        <end position="848"/>
    </location>
</feature>
<feature type="short sequence motif" description="Nuclear localization signal" evidence="2">
    <location>
        <begin position="205"/>
        <end position="222"/>
    </location>
</feature>
<feature type="compositionally biased region" description="Acidic residues" evidence="4">
    <location>
        <begin position="103"/>
        <end position="118"/>
    </location>
</feature>
<feature type="binding site" evidence="1">
    <location>
        <begin position="490"/>
        <end position="498"/>
    </location>
    <ligand>
        <name>GTP</name>
        <dbReference type="ChEBI" id="CHEBI:37565"/>
    </ligand>
</feature>
<feature type="binding site" evidence="2">
    <location>
        <position position="497"/>
    </location>
    <ligand>
        <name>Ca(2+)</name>
        <dbReference type="ChEBI" id="CHEBI:29108"/>
    </ligand>
</feature>
<feature type="binding site" evidence="1">
    <location>
        <begin position="661"/>
        <end position="669"/>
    </location>
    <ligand>
        <name>GTP</name>
        <dbReference type="ChEBI" id="CHEBI:37565"/>
    </ligand>
</feature>
<feature type="binding site" evidence="2">
    <location>
        <position position="669"/>
    </location>
    <ligand>
        <name>Ca(2+)</name>
        <dbReference type="ChEBI" id="CHEBI:29108"/>
    </ligand>
</feature>
<feature type="binding site" evidence="1">
    <location>
        <begin position="774"/>
        <end position="777"/>
    </location>
    <ligand>
        <name>GTP</name>
        <dbReference type="ChEBI" id="CHEBI:37565"/>
    </ligand>
</feature>
<feature type="mutagenesis site" description="Strongly reduces GTP-binding and GTPase activity." evidence="7">
    <original>S</original>
    <variation>N</variation>
    <location>
        <position position="497"/>
    </location>
</feature>
<feature type="sequence conflict" description="In Ref. 1; AAC19353." evidence="8" ref="1">
    <original>C</original>
    <variation>R</variation>
    <location>
        <position position="45"/>
    </location>
</feature>
<feature type="sequence conflict" description="In Ref. 1; AAC19353." evidence="8" ref="1">
    <original>L</original>
    <variation>Q</variation>
    <location>
        <position position="204"/>
    </location>
</feature>
<feature type="sequence conflict" description="In Ref. 1; AAC19353." evidence="8" ref="1">
    <original>N</original>
    <variation>S</variation>
    <location>
        <position position="249"/>
    </location>
</feature>
<feature type="sequence conflict" description="In Ref. 1; AAC19353." evidence="8" ref="1">
    <original>S</original>
    <variation>P</variation>
    <location>
        <position position="336"/>
    </location>
</feature>
<feature type="sequence conflict" description="In Ref. 1; AAC19353." evidence="8" ref="1">
    <original>S</original>
    <variation>N</variation>
    <location>
        <position position="641"/>
    </location>
</feature>
<feature type="sequence conflict" description="In Ref. 1; AAC19353." evidence="8" ref="1">
    <original>L</original>
    <variation>V</variation>
    <location>
        <position position="660"/>
    </location>
</feature>
<dbReference type="EMBL" id="AF060941">
    <property type="protein sequence ID" value="AAC19352.1"/>
    <property type="molecule type" value="mRNA"/>
</dbReference>
<dbReference type="EMBL" id="AF060942">
    <property type="protein sequence ID" value="AAC19353.1"/>
    <property type="molecule type" value="Genomic_DNA"/>
</dbReference>
<dbReference type="EMBL" id="AC003040">
    <property type="protein sequence ID" value="AAC23761.2"/>
    <property type="molecule type" value="Genomic_DNA"/>
</dbReference>
<dbReference type="EMBL" id="CP002685">
    <property type="protein sequence ID" value="AEC07458.1"/>
    <property type="molecule type" value="Genomic_DNA"/>
</dbReference>
<dbReference type="EMBL" id="AY054665">
    <property type="protein sequence ID" value="AAK96856.1"/>
    <property type="status" value="ALT_TERM"/>
    <property type="molecule type" value="mRNA"/>
</dbReference>
<dbReference type="PIR" id="T01135">
    <property type="entry name" value="T01135"/>
</dbReference>
<dbReference type="PIR" id="T51593">
    <property type="entry name" value="T51593"/>
</dbReference>
<dbReference type="RefSeq" id="NP_565553.1">
    <property type="nucleotide sequence ID" value="NM_127910.3"/>
</dbReference>
<dbReference type="SMR" id="O80462"/>
<dbReference type="FunCoup" id="O80462">
    <property type="interactions" value="2302"/>
</dbReference>
<dbReference type="STRING" id="3702.O80462"/>
<dbReference type="iPTMnet" id="O80462"/>
<dbReference type="PaxDb" id="3702-AT2G23460.1"/>
<dbReference type="ProteomicsDB" id="234295"/>
<dbReference type="EnsemblPlants" id="AT2G23460.1">
    <property type="protein sequence ID" value="AT2G23460.1"/>
    <property type="gene ID" value="AT2G23460"/>
</dbReference>
<dbReference type="GeneID" id="816878"/>
<dbReference type="Gramene" id="AT2G23460.1">
    <property type="protein sequence ID" value="AT2G23460.1"/>
    <property type="gene ID" value="AT2G23460"/>
</dbReference>
<dbReference type="KEGG" id="ath:AT2G23460"/>
<dbReference type="Araport" id="AT2G23460"/>
<dbReference type="TAIR" id="AT2G23460">
    <property type="gene designation" value="XLG1"/>
</dbReference>
<dbReference type="eggNOG" id="KOG0082">
    <property type="taxonomic scope" value="Eukaryota"/>
</dbReference>
<dbReference type="HOGENOM" id="CLU_006703_0_1_1"/>
<dbReference type="InParanoid" id="O80462"/>
<dbReference type="OMA" id="HMDFLLI"/>
<dbReference type="PhylomeDB" id="O80462"/>
<dbReference type="PRO" id="PR:O80462"/>
<dbReference type="Proteomes" id="UP000006548">
    <property type="component" value="Chromosome 2"/>
</dbReference>
<dbReference type="ExpressionAtlas" id="O80462">
    <property type="expression patterns" value="baseline and differential"/>
</dbReference>
<dbReference type="GO" id="GO:0005634">
    <property type="term" value="C:nucleus"/>
    <property type="evidence" value="ECO:0000314"/>
    <property type="project" value="TAIR"/>
</dbReference>
<dbReference type="GO" id="GO:0031683">
    <property type="term" value="F:G-protein beta/gamma-subunit complex binding"/>
    <property type="evidence" value="ECO:0007669"/>
    <property type="project" value="InterPro"/>
</dbReference>
<dbReference type="GO" id="GO:0005525">
    <property type="term" value="F:GTP binding"/>
    <property type="evidence" value="ECO:0000314"/>
    <property type="project" value="UniProtKB"/>
</dbReference>
<dbReference type="GO" id="GO:0003924">
    <property type="term" value="F:GTPase activity"/>
    <property type="evidence" value="ECO:0000314"/>
    <property type="project" value="UniProtKB"/>
</dbReference>
<dbReference type="GO" id="GO:0008270">
    <property type="term" value="F:zinc ion binding"/>
    <property type="evidence" value="ECO:0007669"/>
    <property type="project" value="UniProtKB-KW"/>
</dbReference>
<dbReference type="GO" id="GO:0007186">
    <property type="term" value="P:G protein-coupled receptor signaling pathway"/>
    <property type="evidence" value="ECO:0007669"/>
    <property type="project" value="InterPro"/>
</dbReference>
<dbReference type="CDD" id="cd00066">
    <property type="entry name" value="G-alpha"/>
    <property type="match status" value="1"/>
</dbReference>
<dbReference type="FunFam" id="3.40.50.300:FF:001647">
    <property type="entry name" value="Extra-large guanine nucleotide-binding protein 1"/>
    <property type="match status" value="1"/>
</dbReference>
<dbReference type="FunFam" id="1.10.400.10:FF:000005">
    <property type="entry name" value="Extra-large guanine nucleotide-binding protein 3"/>
    <property type="match status" value="1"/>
</dbReference>
<dbReference type="Gene3D" id="1.10.400.10">
    <property type="entry name" value="GI Alpha 1, domain 2-like"/>
    <property type="match status" value="1"/>
</dbReference>
<dbReference type="Gene3D" id="3.40.50.300">
    <property type="entry name" value="P-loop containing nucleotide triphosphate hydrolases"/>
    <property type="match status" value="1"/>
</dbReference>
<dbReference type="InterPro" id="IPR001019">
    <property type="entry name" value="Gprotein_alpha_su"/>
</dbReference>
<dbReference type="InterPro" id="IPR011025">
    <property type="entry name" value="GproteinA_insert"/>
</dbReference>
<dbReference type="InterPro" id="IPR027417">
    <property type="entry name" value="P-loop_NTPase"/>
</dbReference>
<dbReference type="InterPro" id="IPR053057">
    <property type="entry name" value="XLG_GTP-binding"/>
</dbReference>
<dbReference type="PANTHER" id="PTHR36486">
    <property type="entry name" value="OS01G0977800 PROTEIN"/>
    <property type="match status" value="1"/>
</dbReference>
<dbReference type="PANTHER" id="PTHR36486:SF4">
    <property type="entry name" value="PH DOMAIN-CONTAINING PROTEIN"/>
    <property type="match status" value="1"/>
</dbReference>
<dbReference type="Pfam" id="PF00503">
    <property type="entry name" value="G-alpha"/>
    <property type="match status" value="1"/>
</dbReference>
<dbReference type="PRINTS" id="PR00318">
    <property type="entry name" value="GPROTEINA"/>
</dbReference>
<dbReference type="SMART" id="SM00275">
    <property type="entry name" value="G_alpha"/>
    <property type="match status" value="1"/>
</dbReference>
<dbReference type="SUPFAM" id="SSF52540">
    <property type="entry name" value="P-loop containing nucleoside triphosphate hydrolases"/>
    <property type="match status" value="1"/>
</dbReference>
<dbReference type="SUPFAM" id="SSF47895">
    <property type="entry name" value="Transducin (alpha subunit), insertion domain"/>
    <property type="match status" value="1"/>
</dbReference>
<dbReference type="PROSITE" id="PS51882">
    <property type="entry name" value="G_ALPHA"/>
    <property type="match status" value="1"/>
</dbReference>
<comment type="function">
    <text evidence="1 6">Guanine nucleotide-binding proteins (G proteins) are involved as modulators or transducers in various transmembrane signaling systems (By similarity). Binds GTP with specificity. Plays a role in the root morphogenesis by regulation of the cell proliferation.</text>
</comment>
<comment type="cofactor">
    <cofactor evidence="7">
        <name>Ca(2+)</name>
        <dbReference type="ChEBI" id="CHEBI:29108"/>
    </cofactor>
</comment>
<comment type="subcellular location">
    <subcellularLocation>
        <location evidence="6">Nucleus</location>
    </subcellularLocation>
</comment>
<comment type="tissue specificity">
    <text evidence="5 6">Ubiquitous. Strongly expressed in vascular tissues, root and shoot meristems and lateral root primordia.</text>
</comment>
<comment type="domain">
    <text evidence="1">The helical domain (514-664) is required for self-activation.</text>
</comment>
<comment type="disruption phenotype">
    <text evidence="6">No visible phenotype.</text>
</comment>
<comment type="miscellaneous">
    <text evidence="9">Dark-grown xlg1-1 xlg2-1 xlg3-1 triple mutant plants showed markedly increased primary root length compared with wild-type plants. Dark-grown roots of the xlg triple mutants also showed altered sensitivity to sugars, abscisic acid (ABA) hyposensitivity and ethylene hypersensitivity, whereas seed germination in xlg triple mutants was hypersensitive to osmotic stress and ABA (PubMed:17999646).</text>
</comment>
<comment type="similarity">
    <text evidence="8">Belongs to the G-alpha family. XLG subfamily.</text>
</comment>
<comment type="sequence caution" evidence="8">
    <conflict type="erroneous termination">
        <sequence resource="EMBL-CDS" id="AAK96856"/>
    </conflict>
    <text>Truncated C-terminus.</text>
</comment>
<proteinExistence type="evidence at protein level"/>
<accession>O80462</accession>
<accession>O81224</accession>
<accession>O81225</accession>
<accession>Q93Y21</accession>
<reference key="1">
    <citation type="journal article" date="1999" name="Plant Mol. Biol.">
        <title>Arabidopsis thaliana 'extra-large GTP-binding protein' (AtXLG1): a new class of G-protein.</title>
        <authorList>
            <person name="Lee Y.R."/>
            <person name="Assmann S.M."/>
        </authorList>
    </citation>
    <scope>NUCLEOTIDE SEQUENCE [GENOMIC DNA / MRNA]</scope>
    <scope>GTP-BINDING</scope>
    <scope>TISSUE SPECIFICITY</scope>
    <source>
        <strain>cv. Columbia</strain>
        <strain>cv. Landsberg erecta</strain>
    </source>
</reference>
<reference key="2">
    <citation type="journal article" date="1999" name="Nature">
        <title>Sequence and analysis of chromosome 2 of the plant Arabidopsis thaliana.</title>
        <authorList>
            <person name="Lin X."/>
            <person name="Kaul S."/>
            <person name="Rounsley S.D."/>
            <person name="Shea T.P."/>
            <person name="Benito M.-I."/>
            <person name="Town C.D."/>
            <person name="Fujii C.Y."/>
            <person name="Mason T.M."/>
            <person name="Bowman C.L."/>
            <person name="Barnstead M.E."/>
            <person name="Feldblyum T.V."/>
            <person name="Buell C.R."/>
            <person name="Ketchum K.A."/>
            <person name="Lee J.J."/>
            <person name="Ronning C.M."/>
            <person name="Koo H.L."/>
            <person name="Moffat K.S."/>
            <person name="Cronin L.A."/>
            <person name="Shen M."/>
            <person name="Pai G."/>
            <person name="Van Aken S."/>
            <person name="Umayam L."/>
            <person name="Tallon L.J."/>
            <person name="Gill J.E."/>
            <person name="Adams M.D."/>
            <person name="Carrera A.J."/>
            <person name="Creasy T.H."/>
            <person name="Goodman H.M."/>
            <person name="Somerville C.R."/>
            <person name="Copenhaver G.P."/>
            <person name="Preuss D."/>
            <person name="Nierman W.C."/>
            <person name="White O."/>
            <person name="Eisen J.A."/>
            <person name="Salzberg S.L."/>
            <person name="Fraser C.M."/>
            <person name="Venter J.C."/>
        </authorList>
    </citation>
    <scope>NUCLEOTIDE SEQUENCE [LARGE SCALE GENOMIC DNA]</scope>
    <source>
        <strain>cv. Columbia</strain>
    </source>
</reference>
<reference key="3">
    <citation type="journal article" date="2017" name="Plant J.">
        <title>Araport11: a complete reannotation of the Arabidopsis thaliana reference genome.</title>
        <authorList>
            <person name="Cheng C.Y."/>
            <person name="Krishnakumar V."/>
            <person name="Chan A.P."/>
            <person name="Thibaud-Nissen F."/>
            <person name="Schobel S."/>
            <person name="Town C.D."/>
        </authorList>
    </citation>
    <scope>GENOME REANNOTATION</scope>
    <source>
        <strain>cv. Columbia</strain>
    </source>
</reference>
<reference key="4">
    <citation type="journal article" date="2003" name="Science">
        <title>Empirical analysis of transcriptional activity in the Arabidopsis genome.</title>
        <authorList>
            <person name="Yamada K."/>
            <person name="Lim J."/>
            <person name="Dale J.M."/>
            <person name="Chen H."/>
            <person name="Shinn P."/>
            <person name="Palm C.J."/>
            <person name="Southwick A.M."/>
            <person name="Wu H.C."/>
            <person name="Kim C.J."/>
            <person name="Nguyen M."/>
            <person name="Pham P.K."/>
            <person name="Cheuk R.F."/>
            <person name="Karlin-Newmann G."/>
            <person name="Liu S.X."/>
            <person name="Lam B."/>
            <person name="Sakano H."/>
            <person name="Wu T."/>
            <person name="Yu G."/>
            <person name="Miranda M."/>
            <person name="Quach H.L."/>
            <person name="Tripp M."/>
            <person name="Chang C.H."/>
            <person name="Lee J.M."/>
            <person name="Toriumi M.J."/>
            <person name="Chan M.M."/>
            <person name="Tang C.C."/>
            <person name="Onodera C.S."/>
            <person name="Deng J.M."/>
            <person name="Akiyama K."/>
            <person name="Ansari Y."/>
            <person name="Arakawa T."/>
            <person name="Banh J."/>
            <person name="Banno F."/>
            <person name="Bowser L."/>
            <person name="Brooks S.Y."/>
            <person name="Carninci P."/>
            <person name="Chao Q."/>
            <person name="Choy N."/>
            <person name="Enju A."/>
            <person name="Goldsmith A.D."/>
            <person name="Gurjal M."/>
            <person name="Hansen N.F."/>
            <person name="Hayashizaki Y."/>
            <person name="Johnson-Hopson C."/>
            <person name="Hsuan V.W."/>
            <person name="Iida K."/>
            <person name="Karnes M."/>
            <person name="Khan S."/>
            <person name="Koesema E."/>
            <person name="Ishida J."/>
            <person name="Jiang P.X."/>
            <person name="Jones T."/>
            <person name="Kawai J."/>
            <person name="Kamiya A."/>
            <person name="Meyers C."/>
            <person name="Nakajima M."/>
            <person name="Narusaka M."/>
            <person name="Seki M."/>
            <person name="Sakurai T."/>
            <person name="Satou M."/>
            <person name="Tamse R."/>
            <person name="Vaysberg M."/>
            <person name="Wallender E.K."/>
            <person name="Wong C."/>
            <person name="Yamamura Y."/>
            <person name="Yuan S."/>
            <person name="Shinozaki K."/>
            <person name="Davis R.W."/>
            <person name="Theologis A."/>
            <person name="Ecker J.R."/>
        </authorList>
    </citation>
    <scope>NUCLEOTIDE SEQUENCE [LARGE SCALE MRNA]</scope>
    <source>
        <strain>cv. Columbia</strain>
    </source>
</reference>
<reference key="5">
    <citation type="journal article" date="2008" name="Plant J.">
        <title>Arabidopsis extra-large G proteins (XLGs) regulate root morphogenesis.</title>
        <authorList>
            <person name="Ding L."/>
            <person name="Pandey S."/>
            <person name="Assmann S.M."/>
        </authorList>
    </citation>
    <scope>GENE FAMILY</scope>
    <scope>NOMENCLATURE</scope>
    <scope>SUBCELLULAR LOCATION</scope>
    <scope>TISSUE SPECIFICITY</scope>
    <scope>DISRUPTION PHENOTYPE</scope>
    <scope>FUNCTION</scope>
    <source>
        <strain>cv. Columbia</strain>
    </source>
</reference>
<reference key="6">
    <citation type="journal article" date="2012" name="J. Biol. Chem.">
        <title>Ca2+-dependent GTPase, extra-large G protein 2 (XLG2), promotes activation of DNA-binding protein related to vernalization 1 (RTV1), leading to activation of floral integrator genes and early flowering in Arabidopsis.</title>
        <authorList>
            <person name="Heo J.B."/>
            <person name="Sung S."/>
            <person name="Assmann S.M."/>
        </authorList>
    </citation>
    <scope>COFACTOR</scope>
    <scope>GTP-BINDING</scope>
    <scope>MUTAGENESIS OF SER-497</scope>
</reference>